<keyword id="KW-0150">Chloroplast</keyword>
<keyword id="KW-0507">mRNA processing</keyword>
<keyword id="KW-0934">Plastid</keyword>
<keyword id="KW-0694">RNA-binding</keyword>
<keyword id="KW-0819">tRNA processing</keyword>
<dbReference type="EMBL" id="AB084495">
    <property type="protein sequence ID" value="BAC22912.1"/>
    <property type="molecule type" value="Genomic_DNA"/>
</dbReference>
<dbReference type="GO" id="GO:0009507">
    <property type="term" value="C:chloroplast"/>
    <property type="evidence" value="ECO:0007669"/>
    <property type="project" value="UniProtKB-SubCell"/>
</dbReference>
<dbReference type="GO" id="GO:0003723">
    <property type="term" value="F:RNA binding"/>
    <property type="evidence" value="ECO:0007669"/>
    <property type="project" value="UniProtKB-KW"/>
</dbReference>
<dbReference type="GO" id="GO:0006397">
    <property type="term" value="P:mRNA processing"/>
    <property type="evidence" value="ECO:0007669"/>
    <property type="project" value="UniProtKB-KW"/>
</dbReference>
<dbReference type="GO" id="GO:0008380">
    <property type="term" value="P:RNA splicing"/>
    <property type="evidence" value="ECO:0007669"/>
    <property type="project" value="UniProtKB-UniRule"/>
</dbReference>
<dbReference type="GO" id="GO:0008033">
    <property type="term" value="P:tRNA processing"/>
    <property type="evidence" value="ECO:0007669"/>
    <property type="project" value="UniProtKB-KW"/>
</dbReference>
<dbReference type="HAMAP" id="MF_01390">
    <property type="entry name" value="MatK"/>
    <property type="match status" value="1"/>
</dbReference>
<dbReference type="InterPro" id="IPR024937">
    <property type="entry name" value="Domain_X"/>
</dbReference>
<dbReference type="InterPro" id="IPR002866">
    <property type="entry name" value="Maturase_MatK"/>
</dbReference>
<dbReference type="InterPro" id="IPR024942">
    <property type="entry name" value="Maturase_MatK_N"/>
</dbReference>
<dbReference type="PANTHER" id="PTHR34811">
    <property type="entry name" value="MATURASE K"/>
    <property type="match status" value="1"/>
</dbReference>
<dbReference type="PANTHER" id="PTHR34811:SF1">
    <property type="entry name" value="MATURASE K"/>
    <property type="match status" value="1"/>
</dbReference>
<dbReference type="Pfam" id="PF01348">
    <property type="entry name" value="Intron_maturas2"/>
    <property type="match status" value="1"/>
</dbReference>
<dbReference type="Pfam" id="PF01824">
    <property type="entry name" value="MatK_N"/>
    <property type="match status" value="1"/>
</dbReference>
<sequence length="515" mass="60920">MDEFHRCGKEDSFWQQCFLYPLFFQEDLYAISHDHYLDVSSSSRPMEHLSSNDQLSFLTVKRLIGQIRQQNHSIVLFVNCDPNPLADRKKSFYSESVLEALTLVLEVPFSIWSKYSVEGMNECKSFRSIHSIFPFLEDKFPHSNSILDARIPYSIHPEILVRTFRRWIRDAPSLHPLRSVLYDYRNSPENLQRSIIVVPRVNTRFFLFLLNYYVCECESILFSRLKRSSHSRSLSHGSFPQRTHFHRKIKHIIIFSRRNSLKSIWSLKDPKIHYVRYGERPIIAIKGAHLLVKKCRYYLLIFRQFYFHLWSEPYRVCSHQLSKNCSSSPGYFLRVRMNPIFVRTKMLDELFIADLITNEMDPIVPIVPIIGLLATEKFCDISGRPISKLSWTSLTDDDILDRFDQIWRNLFHYYSGSFDRDGLYRIKYILSLSCAKTLACKHKSTIRVVRKELGPELFKKSFSKEREFDSLPFSSKAAARSQRERIWHSDIPQINPLANSWQKIQDLKIENLFDQ</sequence>
<accession>Q8HQQ4</accession>
<organism>
    <name type="scientific">Pinus roxburghii</name>
    <name type="common">Chir pine</name>
    <dbReference type="NCBI Taxonomy" id="71650"/>
    <lineage>
        <taxon>Eukaryota</taxon>
        <taxon>Viridiplantae</taxon>
        <taxon>Streptophyta</taxon>
        <taxon>Embryophyta</taxon>
        <taxon>Tracheophyta</taxon>
        <taxon>Spermatophyta</taxon>
        <taxon>Pinopsida</taxon>
        <taxon>Pinidae</taxon>
        <taxon>Conifers I</taxon>
        <taxon>Pinales</taxon>
        <taxon>Pinaceae</taxon>
        <taxon>Pinus</taxon>
        <taxon>Pinus subgen. Pinus</taxon>
    </lineage>
</organism>
<proteinExistence type="inferred from homology"/>
<geneLocation type="chloroplast"/>
<protein>
    <recommendedName>
        <fullName evidence="1">Maturase K</fullName>
    </recommendedName>
    <alternativeName>
        <fullName evidence="1">Intron maturase</fullName>
    </alternativeName>
</protein>
<name>MATK_PINRO</name>
<evidence type="ECO:0000255" key="1">
    <source>
        <dbReference type="HAMAP-Rule" id="MF_01390"/>
    </source>
</evidence>
<gene>
    <name evidence="1" type="primary">matK</name>
</gene>
<feature type="chain" id="PRO_0000143630" description="Maturase K">
    <location>
        <begin position="1"/>
        <end position="515"/>
    </location>
</feature>
<comment type="function">
    <text evidence="1">Usually encoded in the trnK tRNA gene intron. Probably assists in splicing its own and other chloroplast group II introns.</text>
</comment>
<comment type="subcellular location">
    <subcellularLocation>
        <location>Plastid</location>
        <location>Chloroplast</location>
    </subcellularLocation>
</comment>
<comment type="similarity">
    <text evidence="1">Belongs to the intron maturase 2 family. MatK subfamily.</text>
</comment>
<reference key="1">
    <citation type="submission" date="2002-05" db="EMBL/GenBank/DDBJ databases">
        <title>Phylogeny of diploxylon Pinus.</title>
        <authorList>
            <person name="Geada Lopez G."/>
            <person name="Kamiya K."/>
            <person name="Harada K."/>
        </authorList>
    </citation>
    <scope>NUCLEOTIDE SEQUENCE [GENOMIC DNA]</scope>
    <source>
        <tissue>Leaf</tissue>
    </source>
</reference>